<feature type="chain" id="PRO_0000050331" description="Putative proline/betaine transporter">
    <location>
        <begin position="1"/>
        <end position="466"/>
    </location>
</feature>
<feature type="transmembrane region" description="Helical" evidence="2">
    <location>
        <begin position="20"/>
        <end position="42"/>
    </location>
</feature>
<feature type="transmembrane region" description="Helical" evidence="2">
    <location>
        <begin position="63"/>
        <end position="83"/>
    </location>
</feature>
<feature type="transmembrane region" description="Helical" evidence="2">
    <location>
        <begin position="91"/>
        <end position="111"/>
    </location>
</feature>
<feature type="transmembrane region" description="Helical" evidence="2">
    <location>
        <begin position="116"/>
        <end position="136"/>
    </location>
</feature>
<feature type="transmembrane region" description="Helical" evidence="2">
    <location>
        <begin position="164"/>
        <end position="184"/>
    </location>
</feature>
<feature type="transmembrane region" description="Helical" evidence="2">
    <location>
        <begin position="191"/>
        <end position="211"/>
    </location>
</feature>
<feature type="transmembrane region" description="Helical" evidence="2">
    <location>
        <begin position="239"/>
        <end position="259"/>
    </location>
</feature>
<feature type="transmembrane region" description="Helical" evidence="2">
    <location>
        <begin position="285"/>
        <end position="305"/>
    </location>
</feature>
<feature type="transmembrane region" description="Helical" evidence="2">
    <location>
        <begin position="313"/>
        <end position="332"/>
    </location>
</feature>
<feature type="transmembrane region" description="Helical" evidence="2">
    <location>
        <begin position="337"/>
        <end position="354"/>
    </location>
</feature>
<feature type="transmembrane region" description="Helical" evidence="2">
    <location>
        <begin position="377"/>
        <end position="397"/>
    </location>
</feature>
<feature type="transmembrane region" description="Helical" evidence="2">
    <location>
        <begin position="405"/>
        <end position="425"/>
    </location>
</feature>
<comment type="function">
    <text evidence="1">May be a proton symporter involved in the uptake of osmolytes such as proline and glycine betaine.</text>
</comment>
<comment type="subcellular location">
    <subcellularLocation>
        <location evidence="3">Cell membrane</location>
        <topology evidence="3">Multi-pass membrane protein</topology>
    </subcellularLocation>
</comment>
<comment type="similarity">
    <text evidence="3">Belongs to the major facilitator superfamily. Metabolite:H+ Symporter (MHS) family (TC 2.A.1.6) family.</text>
</comment>
<gene>
    <name type="primary">proP</name>
    <name type="ordered locus">SAS0531</name>
</gene>
<keyword id="KW-1003">Cell membrane</keyword>
<keyword id="KW-0472">Membrane</keyword>
<keyword id="KW-0769">Symport</keyword>
<keyword id="KW-0812">Transmembrane</keyword>
<keyword id="KW-1133">Transmembrane helix</keyword>
<keyword id="KW-0813">Transport</keyword>
<protein>
    <recommendedName>
        <fullName>Putative proline/betaine transporter</fullName>
    </recommendedName>
</protein>
<reference key="1">
    <citation type="journal article" date="2004" name="Proc. Natl. Acad. Sci. U.S.A.">
        <title>Complete genomes of two clinical Staphylococcus aureus strains: evidence for the rapid evolution of virulence and drug resistance.</title>
        <authorList>
            <person name="Holden M.T.G."/>
            <person name="Feil E.J."/>
            <person name="Lindsay J.A."/>
            <person name="Peacock S.J."/>
            <person name="Day N.P.J."/>
            <person name="Enright M.C."/>
            <person name="Foster T.J."/>
            <person name="Moore C.E."/>
            <person name="Hurst L."/>
            <person name="Atkin R."/>
            <person name="Barron A."/>
            <person name="Bason N."/>
            <person name="Bentley S.D."/>
            <person name="Chillingworth C."/>
            <person name="Chillingworth T."/>
            <person name="Churcher C."/>
            <person name="Clark L."/>
            <person name="Corton C."/>
            <person name="Cronin A."/>
            <person name="Doggett J."/>
            <person name="Dowd L."/>
            <person name="Feltwell T."/>
            <person name="Hance Z."/>
            <person name="Harris B."/>
            <person name="Hauser H."/>
            <person name="Holroyd S."/>
            <person name="Jagels K."/>
            <person name="James K.D."/>
            <person name="Lennard N."/>
            <person name="Line A."/>
            <person name="Mayes R."/>
            <person name="Moule S."/>
            <person name="Mungall K."/>
            <person name="Ormond D."/>
            <person name="Quail M.A."/>
            <person name="Rabbinowitsch E."/>
            <person name="Rutherford K.M."/>
            <person name="Sanders M."/>
            <person name="Sharp S."/>
            <person name="Simmonds M."/>
            <person name="Stevens K."/>
            <person name="Whitehead S."/>
            <person name="Barrell B.G."/>
            <person name="Spratt B.G."/>
            <person name="Parkhill J."/>
        </authorList>
    </citation>
    <scope>NUCLEOTIDE SEQUENCE [LARGE SCALE GENOMIC DNA]</scope>
    <source>
        <strain>MSSA476</strain>
    </source>
</reference>
<name>PROP_STAAS</name>
<evidence type="ECO:0000250" key="1"/>
<evidence type="ECO:0000255" key="2"/>
<evidence type="ECO:0000305" key="3"/>
<organism>
    <name type="scientific">Staphylococcus aureus (strain MSSA476)</name>
    <dbReference type="NCBI Taxonomy" id="282459"/>
    <lineage>
        <taxon>Bacteria</taxon>
        <taxon>Bacillati</taxon>
        <taxon>Bacillota</taxon>
        <taxon>Bacilli</taxon>
        <taxon>Bacillales</taxon>
        <taxon>Staphylococcaceae</taxon>
        <taxon>Staphylococcus</taxon>
    </lineage>
</organism>
<dbReference type="EMBL" id="BX571857">
    <property type="protein sequence ID" value="CAG42306.1"/>
    <property type="molecule type" value="Genomic_DNA"/>
</dbReference>
<dbReference type="RefSeq" id="WP_000347058.1">
    <property type="nucleotide sequence ID" value="NC_002953.3"/>
</dbReference>
<dbReference type="SMR" id="Q6GBR4"/>
<dbReference type="KEGG" id="sas:SAS0531"/>
<dbReference type="HOGENOM" id="CLU_001265_39_0_9"/>
<dbReference type="GO" id="GO:0005886">
    <property type="term" value="C:plasma membrane"/>
    <property type="evidence" value="ECO:0007669"/>
    <property type="project" value="UniProtKB-SubCell"/>
</dbReference>
<dbReference type="GO" id="GO:0015293">
    <property type="term" value="F:symporter activity"/>
    <property type="evidence" value="ECO:0007669"/>
    <property type="project" value="UniProtKB-KW"/>
</dbReference>
<dbReference type="FunFam" id="1.20.1250.20:FF:000001">
    <property type="entry name" value="Dicarboxylate MFS transporter"/>
    <property type="match status" value="1"/>
</dbReference>
<dbReference type="FunFam" id="1.20.1250.20:FF:000236">
    <property type="entry name" value="Proline/betaine transporter, putative"/>
    <property type="match status" value="1"/>
</dbReference>
<dbReference type="Gene3D" id="1.20.1250.20">
    <property type="entry name" value="MFS general substrate transporter like domains"/>
    <property type="match status" value="2"/>
</dbReference>
<dbReference type="InterPro" id="IPR051084">
    <property type="entry name" value="H+-coupled_symporters"/>
</dbReference>
<dbReference type="InterPro" id="IPR011701">
    <property type="entry name" value="MFS"/>
</dbReference>
<dbReference type="InterPro" id="IPR020846">
    <property type="entry name" value="MFS_dom"/>
</dbReference>
<dbReference type="InterPro" id="IPR036259">
    <property type="entry name" value="MFS_trans_sf"/>
</dbReference>
<dbReference type="InterPro" id="IPR005829">
    <property type="entry name" value="Sugar_transporter_CS"/>
</dbReference>
<dbReference type="PANTHER" id="PTHR43528">
    <property type="entry name" value="ALPHA-KETOGLUTARATE PERMEASE"/>
    <property type="match status" value="1"/>
</dbReference>
<dbReference type="PANTHER" id="PTHR43528:SF1">
    <property type="entry name" value="ALPHA-KETOGLUTARATE PERMEASE"/>
    <property type="match status" value="1"/>
</dbReference>
<dbReference type="Pfam" id="PF07690">
    <property type="entry name" value="MFS_1"/>
    <property type="match status" value="1"/>
</dbReference>
<dbReference type="SUPFAM" id="SSF103473">
    <property type="entry name" value="MFS general substrate transporter"/>
    <property type="match status" value="1"/>
</dbReference>
<dbReference type="PROSITE" id="PS50850">
    <property type="entry name" value="MFS"/>
    <property type="match status" value="1"/>
</dbReference>
<dbReference type="PROSITE" id="PS00217">
    <property type="entry name" value="SUGAR_TRANSPORT_2"/>
    <property type="match status" value="1"/>
</dbReference>
<sequence length="466" mass="51643">MDFNKENINMVDAKKAKKTVVATGIGNAMEWFDFGVYAYTTAYIGANFFSPVENADIRQMLTFAALAIAFLLRPIGGVVFGIIGDKYGRKVVLTSTIILMAFSTLTIGLLPSYDQIGLWAPILLLLARVLQGFSTGGEYAGAMTYVAESSPDKRRNSLGSGLEIGTLSGYIAASIMIAVLTFFLTDEQMASFGWRIPFLLGLFLGLFGLYLRRKLEESPVFENDVATQPERDNINFLQIIRFYYIDIFVCFVAVVFFNVTNYMVTAYLPTYLEQVIKLDATTTSVLITCVMAIMIPLALMFGKLADKIGEKKVFLIGTGGLTLFSIIAFMLLHSQSFVVIVIGIFILGFFLSTYEATMPGSLPTMFYSHIRYRTLSVTFNISVSIFGGTTPLVATWLVTKTGDPLAPAYYLTAISVIGFLVITFLHLSTAGKSLKGSYPNVDNEQDRAYYAEHPKEALWWVKERKN</sequence>
<proteinExistence type="inferred from homology"/>
<accession>Q6GBR4</accession>